<dbReference type="EMBL" id="EU667388">
    <property type="protein sequence ID" value="ACD13786.1"/>
    <property type="molecule type" value="mRNA"/>
</dbReference>
<dbReference type="EMBL" id="AF068284">
    <property type="protein sequence ID" value="AAF65503.1"/>
    <property type="molecule type" value="mRNA"/>
</dbReference>
<dbReference type="EMBL" id="AC106864">
    <property type="status" value="NOT_ANNOTATED_CDS"/>
    <property type="molecule type" value="Genomic_DNA"/>
</dbReference>
<dbReference type="EMBL" id="CH471057">
    <property type="protein sequence ID" value="EAX06284.1"/>
    <property type="molecule type" value="Genomic_DNA"/>
</dbReference>
<dbReference type="EMBL" id="BC066945">
    <property type="protein sequence ID" value="AAH66945.1"/>
    <property type="status" value="ALT_INIT"/>
    <property type="molecule type" value="mRNA"/>
</dbReference>
<dbReference type="EMBL" id="BC107709">
    <property type="protein sequence ID" value="AAI07710.2"/>
    <property type="molecule type" value="mRNA"/>
</dbReference>
<dbReference type="EMBL" id="AL049996">
    <property type="protein sequence ID" value="CAB43230.1"/>
    <property type="molecule type" value="mRNA"/>
</dbReference>
<dbReference type="CCDS" id="CCDS3701.2">
    <molecule id="Q4G0J3-1"/>
</dbReference>
<dbReference type="PIR" id="T08692">
    <property type="entry name" value="T08692"/>
</dbReference>
<dbReference type="RefSeq" id="NP_001253968.2">
    <molecule id="Q4G0J3-1"/>
    <property type="nucleotide sequence ID" value="NM_001267039.4"/>
</dbReference>
<dbReference type="RefSeq" id="NP_001357907.1">
    <molecule id="Q4G0J3-1"/>
    <property type="nucleotide sequence ID" value="NM_001370978.1"/>
</dbReference>
<dbReference type="RefSeq" id="NP_056269.1">
    <molecule id="Q4G0J3-1"/>
    <property type="nucleotide sequence ID" value="NM_015454.3"/>
</dbReference>
<dbReference type="RefSeq" id="NP_057732.2">
    <molecule id="Q4G0J3-1"/>
    <property type="nucleotide sequence ID" value="NM_016648.4"/>
</dbReference>
<dbReference type="RefSeq" id="XP_047271726.1">
    <molecule id="Q4G0J3-1"/>
    <property type="nucleotide sequence ID" value="XM_047415770.1"/>
</dbReference>
<dbReference type="RefSeq" id="XP_047271727.1">
    <molecule id="Q4G0J3-1"/>
    <property type="nucleotide sequence ID" value="XM_047415771.1"/>
</dbReference>
<dbReference type="RefSeq" id="XP_054206140.1">
    <molecule id="Q4G0J3-1"/>
    <property type="nucleotide sequence ID" value="XM_054350165.1"/>
</dbReference>
<dbReference type="RefSeq" id="XP_054206141.1">
    <molecule id="Q4G0J3-1"/>
    <property type="nucleotide sequence ID" value="XM_054350166.1"/>
</dbReference>
<dbReference type="PDB" id="4WKR">
    <property type="method" value="X-ray"/>
    <property type="resolution" value="3.20 A"/>
    <property type="chains" value="A/B=1-208"/>
</dbReference>
<dbReference type="PDB" id="5KNW">
    <property type="method" value="NMR"/>
    <property type="chains" value="A=445-561"/>
</dbReference>
<dbReference type="PDB" id="6D12">
    <property type="method" value="X-ray"/>
    <property type="resolution" value="2.21 A"/>
    <property type="chains" value="A/B=445-556"/>
</dbReference>
<dbReference type="PDB" id="7SLP">
    <property type="method" value="EM"/>
    <property type="resolution" value="4.10 A"/>
    <property type="chains" value="B=1-582"/>
</dbReference>
<dbReference type="PDB" id="7SLQ">
    <property type="method" value="EM"/>
    <property type="resolution" value="3.70 A"/>
    <property type="chains" value="B=1-582"/>
</dbReference>
<dbReference type="PDBsum" id="4WKR"/>
<dbReference type="PDBsum" id="5KNW"/>
<dbReference type="PDBsum" id="6D12"/>
<dbReference type="PDBsum" id="7SLP"/>
<dbReference type="PDBsum" id="7SLQ"/>
<dbReference type="EMDB" id="EMD-25197"/>
<dbReference type="EMDB" id="EMD-25198"/>
<dbReference type="SMR" id="Q4G0J3"/>
<dbReference type="BioGRID" id="119619">
    <property type="interactions" value="1128"/>
</dbReference>
<dbReference type="CORUM" id="Q4G0J3"/>
<dbReference type="DIP" id="DIP-47624N"/>
<dbReference type="FunCoup" id="Q4G0J3">
    <property type="interactions" value="2681"/>
</dbReference>
<dbReference type="IntAct" id="Q4G0J3">
    <property type="interactions" value="586"/>
</dbReference>
<dbReference type="MINT" id="Q4G0J3"/>
<dbReference type="STRING" id="9606.ENSP00000422626"/>
<dbReference type="BindingDB" id="Q4G0J3"/>
<dbReference type="ChEMBL" id="CHEMBL4523314"/>
<dbReference type="CarbonylDB" id="Q4G0J3"/>
<dbReference type="GlyCosmos" id="Q4G0J3">
    <property type="glycosylation" value="1 site, 1 glycan"/>
</dbReference>
<dbReference type="GlyGen" id="Q4G0J3">
    <property type="glycosylation" value="1 site, 1 O-linked glycan (1 site)"/>
</dbReference>
<dbReference type="iPTMnet" id="Q4G0J3"/>
<dbReference type="PhosphoSitePlus" id="Q4G0J3"/>
<dbReference type="BioMuta" id="LARP7"/>
<dbReference type="DMDM" id="121945944"/>
<dbReference type="jPOST" id="Q4G0J3"/>
<dbReference type="MassIVE" id="Q4G0J3"/>
<dbReference type="PaxDb" id="9606-ENSP00000422626"/>
<dbReference type="PeptideAtlas" id="Q4G0J3"/>
<dbReference type="ProteomicsDB" id="62106">
    <molecule id="Q4G0J3-1"/>
</dbReference>
<dbReference type="ProteomicsDB" id="62107">
    <molecule id="Q4G0J3-2"/>
</dbReference>
<dbReference type="Pumba" id="Q4G0J3"/>
<dbReference type="Antibodypedia" id="15535">
    <property type="antibodies" value="215 antibodies from 28 providers"/>
</dbReference>
<dbReference type="DNASU" id="51574"/>
<dbReference type="Ensembl" id="ENST00000344442.10">
    <molecule id="Q4G0J3-1"/>
    <property type="protein sequence ID" value="ENSP00000344950.5"/>
    <property type="gene ID" value="ENSG00000174720.18"/>
</dbReference>
<dbReference type="Ensembl" id="ENST00000505034.6">
    <molecule id="Q4G0J3-1"/>
    <property type="protein sequence ID" value="ENSP00000421541.2"/>
    <property type="gene ID" value="ENSG00000174720.18"/>
</dbReference>
<dbReference type="Ensembl" id="ENST00000509061.5">
    <molecule id="Q4G0J3-1"/>
    <property type="protein sequence ID" value="ENSP00000422626.2"/>
    <property type="gene ID" value="ENSG00000174720.18"/>
</dbReference>
<dbReference type="Ensembl" id="ENST00000651579.1">
    <molecule id="Q4G0J3-1"/>
    <property type="protein sequence ID" value="ENSP00000499190.1"/>
    <property type="gene ID" value="ENSG00000174720.18"/>
</dbReference>
<dbReference type="Ensembl" id="ENST00000694894.1">
    <molecule id="Q4G0J3-1"/>
    <property type="protein sequence ID" value="ENSP00000511572.1"/>
    <property type="gene ID" value="ENSG00000174720.18"/>
</dbReference>
<dbReference type="GeneID" id="51574"/>
<dbReference type="KEGG" id="hsa:51574"/>
<dbReference type="MANE-Select" id="ENST00000344442.10">
    <property type="protein sequence ID" value="ENSP00000344950.5"/>
    <property type="RefSeq nucleotide sequence ID" value="NM_016648.4"/>
    <property type="RefSeq protein sequence ID" value="NP_057732.2"/>
</dbReference>
<dbReference type="UCSC" id="uc003iay.5">
    <molecule id="Q4G0J3-1"/>
    <property type="organism name" value="human"/>
</dbReference>
<dbReference type="AGR" id="HGNC:24912"/>
<dbReference type="CTD" id="51574"/>
<dbReference type="DisGeNET" id="51574"/>
<dbReference type="GeneCards" id="LARP7"/>
<dbReference type="HGNC" id="HGNC:24912">
    <property type="gene designation" value="LARP7"/>
</dbReference>
<dbReference type="HPA" id="ENSG00000174720">
    <property type="expression patterns" value="Low tissue specificity"/>
</dbReference>
<dbReference type="MalaCards" id="LARP7"/>
<dbReference type="MIM" id="612026">
    <property type="type" value="gene"/>
</dbReference>
<dbReference type="MIM" id="615071">
    <property type="type" value="phenotype"/>
</dbReference>
<dbReference type="neXtProt" id="NX_Q4G0J3"/>
<dbReference type="OpenTargets" id="ENSG00000174720"/>
<dbReference type="Orphanet" id="319671">
    <property type="disease" value="Alazami syndrome"/>
</dbReference>
<dbReference type="PharmGKB" id="PA145148525"/>
<dbReference type="VEuPathDB" id="HostDB:ENSG00000174720"/>
<dbReference type="eggNOG" id="KOG1855">
    <property type="taxonomic scope" value="Eukaryota"/>
</dbReference>
<dbReference type="GeneTree" id="ENSGT00940000154949"/>
<dbReference type="HOGENOM" id="CLU_020946_2_0_1"/>
<dbReference type="InParanoid" id="Q4G0J3"/>
<dbReference type="OMA" id="WCSLRNK"/>
<dbReference type="OrthoDB" id="439993at2759"/>
<dbReference type="PAN-GO" id="Q4G0J3">
    <property type="GO annotations" value="5 GO annotations based on evolutionary models"/>
</dbReference>
<dbReference type="PhylomeDB" id="Q4G0J3"/>
<dbReference type="TreeFam" id="TF314476"/>
<dbReference type="PathwayCommons" id="Q4G0J3"/>
<dbReference type="SignaLink" id="Q4G0J3"/>
<dbReference type="SIGNOR" id="Q4G0J3"/>
<dbReference type="BioGRID-ORCS" id="51574">
    <property type="hits" value="58 hits in 1166 CRISPR screens"/>
</dbReference>
<dbReference type="CD-CODE" id="91857CE7">
    <property type="entry name" value="Nucleolus"/>
</dbReference>
<dbReference type="ChiTaRS" id="LARP7">
    <property type="organism name" value="human"/>
</dbReference>
<dbReference type="EvolutionaryTrace" id="Q4G0J3"/>
<dbReference type="GenomeRNAi" id="51574"/>
<dbReference type="Pharos" id="Q4G0J3">
    <property type="development level" value="Tchem"/>
</dbReference>
<dbReference type="PRO" id="PR:Q4G0J3"/>
<dbReference type="Proteomes" id="UP000005640">
    <property type="component" value="Chromosome 4"/>
</dbReference>
<dbReference type="RNAct" id="Q4G0J3">
    <property type="molecule type" value="protein"/>
</dbReference>
<dbReference type="Bgee" id="ENSG00000174720">
    <property type="expression patterns" value="Expressed in calcaneal tendon and 210 other cell types or tissues"/>
</dbReference>
<dbReference type="ExpressionAtlas" id="Q4G0J3">
    <property type="expression patterns" value="baseline and differential"/>
</dbReference>
<dbReference type="GO" id="GO:0120259">
    <property type="term" value="C:7SK snRNP"/>
    <property type="evidence" value="ECO:0000314"/>
    <property type="project" value="FlyBase"/>
</dbReference>
<dbReference type="GO" id="GO:0005829">
    <property type="term" value="C:cytosol"/>
    <property type="evidence" value="ECO:0000314"/>
    <property type="project" value="HPA"/>
</dbReference>
<dbReference type="GO" id="GO:0005654">
    <property type="term" value="C:nucleoplasm"/>
    <property type="evidence" value="ECO:0000314"/>
    <property type="project" value="HPA"/>
</dbReference>
<dbReference type="GO" id="GO:0005634">
    <property type="term" value="C:nucleus"/>
    <property type="evidence" value="ECO:0000314"/>
    <property type="project" value="UniProtKB"/>
</dbReference>
<dbReference type="GO" id="GO:1990904">
    <property type="term" value="C:ribonucleoprotein complex"/>
    <property type="evidence" value="ECO:0000314"/>
    <property type="project" value="UniProtKB"/>
</dbReference>
<dbReference type="GO" id="GO:0097322">
    <property type="term" value="F:7SK snRNA binding"/>
    <property type="evidence" value="ECO:0000314"/>
    <property type="project" value="UniProtKB"/>
</dbReference>
<dbReference type="GO" id="GO:0003723">
    <property type="term" value="F:RNA binding"/>
    <property type="evidence" value="ECO:0007005"/>
    <property type="project" value="UniProtKB"/>
</dbReference>
<dbReference type="GO" id="GO:0017070">
    <property type="term" value="F:U6 snRNA binding"/>
    <property type="evidence" value="ECO:0000314"/>
    <property type="project" value="UniProtKB"/>
</dbReference>
<dbReference type="GO" id="GO:0000494">
    <property type="term" value="P:box C/D sno(s)RNA 3'-end processing"/>
    <property type="evidence" value="ECO:0000315"/>
    <property type="project" value="UniProtKB"/>
</dbReference>
<dbReference type="GO" id="GO:0030154">
    <property type="term" value="P:cell differentiation"/>
    <property type="evidence" value="ECO:0007669"/>
    <property type="project" value="UniProtKB-KW"/>
</dbReference>
<dbReference type="GO" id="GO:0006397">
    <property type="term" value="P:mRNA processing"/>
    <property type="evidence" value="ECO:0007669"/>
    <property type="project" value="UniProtKB-KW"/>
</dbReference>
<dbReference type="GO" id="GO:0000122">
    <property type="term" value="P:negative regulation of transcription by RNA polymerase II"/>
    <property type="evidence" value="ECO:0000315"/>
    <property type="project" value="FlyBase"/>
</dbReference>
<dbReference type="GO" id="GO:0034244">
    <property type="term" value="P:negative regulation of transcription elongation by RNA polymerase II"/>
    <property type="evidence" value="ECO:0000305"/>
    <property type="project" value="FlyBase"/>
</dbReference>
<dbReference type="GO" id="GO:0032897">
    <property type="term" value="P:negative regulation of viral transcription"/>
    <property type="evidence" value="ECO:0000315"/>
    <property type="project" value="FlyBase"/>
</dbReference>
<dbReference type="GO" id="GO:1904871">
    <property type="term" value="P:positive regulation of protein localization to Cajal body"/>
    <property type="evidence" value="ECO:0000314"/>
    <property type="project" value="UniProtKB"/>
</dbReference>
<dbReference type="GO" id="GO:1905382">
    <property type="term" value="P:positive regulation of snRNA transcription by RNA polymerase II"/>
    <property type="evidence" value="ECO:0000314"/>
    <property type="project" value="UniProtKB"/>
</dbReference>
<dbReference type="GO" id="GO:0048024">
    <property type="term" value="P:regulation of mRNA splicing, via spliceosome"/>
    <property type="evidence" value="ECO:0000315"/>
    <property type="project" value="UniProtKB"/>
</dbReference>
<dbReference type="GO" id="GO:0008380">
    <property type="term" value="P:RNA splicing"/>
    <property type="evidence" value="ECO:0007669"/>
    <property type="project" value="UniProtKB-KW"/>
</dbReference>
<dbReference type="GO" id="GO:0007283">
    <property type="term" value="P:spermatogenesis"/>
    <property type="evidence" value="ECO:0000250"/>
    <property type="project" value="UniProtKB"/>
</dbReference>
<dbReference type="GO" id="GO:1990438">
    <property type="term" value="P:U6 2'-O-snRNA methylation"/>
    <property type="evidence" value="ECO:0000315"/>
    <property type="project" value="UniProtKB"/>
</dbReference>
<dbReference type="CDD" id="cd08032">
    <property type="entry name" value="LARP_7"/>
    <property type="match status" value="1"/>
</dbReference>
<dbReference type="CDD" id="cd12290">
    <property type="entry name" value="RRM1_LARP7"/>
    <property type="match status" value="1"/>
</dbReference>
<dbReference type="CDD" id="cd12542">
    <property type="entry name" value="RRM2_LARP7"/>
    <property type="match status" value="1"/>
</dbReference>
<dbReference type="FunFam" id="1.10.10.10:FF:000158">
    <property type="entry name" value="La ribonucleoprotein domain family member 7"/>
    <property type="match status" value="1"/>
</dbReference>
<dbReference type="FunFam" id="3.30.70.330:FF:000281">
    <property type="entry name" value="la-related protein 7 isoform X1"/>
    <property type="match status" value="1"/>
</dbReference>
<dbReference type="FunFam" id="3.30.70.330:FF:000379">
    <property type="entry name" value="la-related protein 7 isoform X2"/>
    <property type="match status" value="1"/>
</dbReference>
<dbReference type="Gene3D" id="3.30.70.330">
    <property type="match status" value="2"/>
</dbReference>
<dbReference type="Gene3D" id="1.10.10.10">
    <property type="entry name" value="Winged helix-like DNA-binding domain superfamily/Winged helix DNA-binding domain"/>
    <property type="match status" value="1"/>
</dbReference>
<dbReference type="InterPro" id="IPR045180">
    <property type="entry name" value="La_dom_prot"/>
</dbReference>
<dbReference type="InterPro" id="IPR006630">
    <property type="entry name" value="La_HTH"/>
</dbReference>
<dbReference type="InterPro" id="IPR014886">
    <property type="entry name" value="La_xRRM"/>
</dbReference>
<dbReference type="InterPro" id="IPR034946">
    <property type="entry name" value="LARP7_La"/>
</dbReference>
<dbReference type="InterPro" id="IPR034887">
    <property type="entry name" value="LARP7_RRM1"/>
</dbReference>
<dbReference type="InterPro" id="IPR034910">
    <property type="entry name" value="LARP7_RRM2"/>
</dbReference>
<dbReference type="InterPro" id="IPR002344">
    <property type="entry name" value="Lupus_La"/>
</dbReference>
<dbReference type="InterPro" id="IPR012677">
    <property type="entry name" value="Nucleotide-bd_a/b_plait_sf"/>
</dbReference>
<dbReference type="InterPro" id="IPR035979">
    <property type="entry name" value="RBD_domain_sf"/>
</dbReference>
<dbReference type="InterPro" id="IPR000504">
    <property type="entry name" value="RRM_dom"/>
</dbReference>
<dbReference type="InterPro" id="IPR036388">
    <property type="entry name" value="WH-like_DNA-bd_sf"/>
</dbReference>
<dbReference type="InterPro" id="IPR036390">
    <property type="entry name" value="WH_DNA-bd_sf"/>
</dbReference>
<dbReference type="PANTHER" id="PTHR22792:SF62">
    <property type="entry name" value="LA-RELATED PROTEIN 7"/>
    <property type="match status" value="1"/>
</dbReference>
<dbReference type="PANTHER" id="PTHR22792">
    <property type="entry name" value="LUPUS LA PROTEIN-RELATED"/>
    <property type="match status" value="1"/>
</dbReference>
<dbReference type="Pfam" id="PF05383">
    <property type="entry name" value="La"/>
    <property type="match status" value="1"/>
</dbReference>
<dbReference type="Pfam" id="PF00076">
    <property type="entry name" value="RRM_1"/>
    <property type="match status" value="1"/>
</dbReference>
<dbReference type="Pfam" id="PF08777">
    <property type="entry name" value="RRM_3"/>
    <property type="match status" value="1"/>
</dbReference>
<dbReference type="PRINTS" id="PR00302">
    <property type="entry name" value="LUPUSLA"/>
</dbReference>
<dbReference type="SMART" id="SM00715">
    <property type="entry name" value="LA"/>
    <property type="match status" value="1"/>
</dbReference>
<dbReference type="SMART" id="SM00360">
    <property type="entry name" value="RRM"/>
    <property type="match status" value="1"/>
</dbReference>
<dbReference type="SUPFAM" id="SSF54928">
    <property type="entry name" value="RNA-binding domain, RBD"/>
    <property type="match status" value="2"/>
</dbReference>
<dbReference type="SUPFAM" id="SSF46785">
    <property type="entry name" value="Winged helix' DNA-binding domain"/>
    <property type="match status" value="1"/>
</dbReference>
<dbReference type="PROSITE" id="PS50961">
    <property type="entry name" value="HTH_LA"/>
    <property type="match status" value="1"/>
</dbReference>
<dbReference type="PROSITE" id="PS50102">
    <property type="entry name" value="RRM"/>
    <property type="match status" value="1"/>
</dbReference>
<dbReference type="PROSITE" id="PS51939">
    <property type="entry name" value="XRRM"/>
    <property type="match status" value="1"/>
</dbReference>
<feature type="chain" id="PRO_0000281143" description="La-related protein 7">
    <location>
        <begin position="1"/>
        <end position="582"/>
    </location>
</feature>
<feature type="domain" description="HTH La-type RNA-binding" evidence="3">
    <location>
        <begin position="28"/>
        <end position="122"/>
    </location>
</feature>
<feature type="domain" description="RRM" evidence="2">
    <location>
        <begin position="125"/>
        <end position="203"/>
    </location>
</feature>
<feature type="domain" description="xRRM" evidence="4">
    <location>
        <begin position="450"/>
        <end position="563"/>
    </location>
</feature>
<feature type="region of interest" description="Disordered" evidence="5">
    <location>
        <begin position="1"/>
        <end position="27"/>
    </location>
</feature>
<feature type="region of interest" description="Disordered" evidence="5">
    <location>
        <begin position="188"/>
        <end position="368"/>
    </location>
</feature>
<feature type="region of interest" description="Disordered" evidence="5">
    <location>
        <begin position="410"/>
        <end position="442"/>
    </location>
</feature>
<feature type="compositionally biased region" description="Basic and acidic residues" evidence="5">
    <location>
        <begin position="10"/>
        <end position="25"/>
    </location>
</feature>
<feature type="compositionally biased region" description="Basic residues" evidence="5">
    <location>
        <begin position="219"/>
        <end position="228"/>
    </location>
</feature>
<feature type="compositionally biased region" description="Basic and acidic residues" evidence="5">
    <location>
        <begin position="229"/>
        <end position="240"/>
    </location>
</feature>
<feature type="compositionally biased region" description="Basic and acidic residues" evidence="5">
    <location>
        <begin position="316"/>
        <end position="335"/>
    </location>
</feature>
<feature type="compositionally biased region" description="Basic residues" evidence="5">
    <location>
        <begin position="354"/>
        <end position="367"/>
    </location>
</feature>
<feature type="compositionally biased region" description="Basic and acidic residues" evidence="5">
    <location>
        <begin position="428"/>
        <end position="442"/>
    </location>
</feature>
<feature type="modified residue" description="N-acetylmethionine" evidence="38">
    <location>
        <position position="1"/>
    </location>
</feature>
<feature type="modified residue" description="Phosphothreonine" evidence="34">
    <location>
        <position position="257"/>
    </location>
</feature>
<feature type="modified residue" description="Phosphoserine" evidence="34 36 37 39">
    <location>
        <position position="258"/>
    </location>
</feature>
<feature type="modified residue" description="Phosphoserine" evidence="34 36 37 39 40">
    <location>
        <position position="261"/>
    </location>
</feature>
<feature type="modified residue" description="Phosphoserine" evidence="34">
    <location>
        <position position="273"/>
    </location>
</feature>
<feature type="modified residue" description="Phosphoserine" evidence="39">
    <location>
        <position position="298"/>
    </location>
</feature>
<feature type="modified residue" description="Phosphoserine" evidence="39">
    <location>
        <position position="299"/>
    </location>
</feature>
<feature type="modified residue" description="Phosphoserine" evidence="39">
    <location>
        <position position="300"/>
    </location>
</feature>
<feature type="modified residue" description="Phosphoserine" evidence="34 35 36 37 39 40">
    <location>
        <position position="337"/>
    </location>
</feature>
<feature type="modified residue" description="Phosphothreonine" evidence="34 35 36 37 39 40">
    <location>
        <position position="338"/>
    </location>
</feature>
<feature type="modified residue" description="Phosphoserine" evidence="39">
    <location>
        <position position="351"/>
    </location>
</feature>
<feature type="cross-link" description="Glycyl lysine isopeptide (Lys-Gly) (interchain with G-Cter in SUMO2)" evidence="41">
    <location>
        <position position="237"/>
    </location>
</feature>
<feature type="cross-link" description="Glycyl lysine isopeptide (Lys-Gly) (interchain with G-Cter in SUMO2)" evidence="41">
    <location>
        <position position="410"/>
    </location>
</feature>
<feature type="splice variant" id="VSP_024021" description="In isoform 2." evidence="28">
    <location>
        <begin position="1"/>
        <end position="368"/>
    </location>
</feature>
<feature type="splice variant" id="VSP_047390" description="In isoform 3." evidence="24 26">
    <original>M</original>
    <variation>MIPNIEGM</variation>
    <location>
        <position position="1"/>
    </location>
</feature>
<feature type="sequence variant" id="VAR_083351" description="In ALAZS; reduced 2'-O-methylation of U6 snRNAs and defects in mRNA splicing." evidence="23">
    <original>ITKAEKIRLAKTQQASKHIRFSEYD</original>
    <variation>KRLDWQRLNKRVNI</variation>
    <location>
        <begin position="558"/>
        <end position="582"/>
    </location>
</feature>
<feature type="mutagenesis site" description="Reduced binding to U6 snRNA without affecting binding to 7SK RNA. Reduced 2'-O-methylation of U6 snRNAs." evidence="23">
    <original>F</original>
    <variation>A</variation>
    <location>
        <position position="44"/>
    </location>
</feature>
<feature type="mutagenesis site" description="Loss of 7SK RNA-binding and marked decrease in 7SK RNP complex formation." evidence="6">
    <original>Y</original>
    <variation>D</variation>
    <location>
        <position position="128"/>
    </location>
</feature>
<feature type="mutagenesis site" description="Decreased RNA-binding." evidence="12">
    <original>E</original>
    <variation>A</variation>
    <location>
        <position position="130"/>
    </location>
</feature>
<feature type="mutagenesis site" description="Does not affect RNA-binding." evidence="12">
    <original>F</original>
    <variation>A</variation>
    <location>
        <position position="168"/>
    </location>
</feature>
<feature type="mutagenesis site" description="Does not affect binding to the 7SK RNA." evidence="20">
    <original>F</original>
    <variation>A</variation>
    <location>
        <position position="451"/>
    </location>
</feature>
<feature type="mutagenesis site" description="Does not affect binding to the 7SK RNA." evidence="20">
    <original>R</original>
    <variation>A</variation>
    <location>
        <position position="472"/>
    </location>
</feature>
<feature type="mutagenesis site" description="Reduced binding to the 7SK RNA. Does not affect binding to U6 snRNA." evidence="20 23">
    <original>Y</original>
    <variation>A</variation>
    <location>
        <position position="483"/>
    </location>
</feature>
<feature type="mutagenesis site" description="Does not affect binding to the 7SK RNA." evidence="20">
    <original>Y</original>
    <variation>F</variation>
    <location>
        <position position="483"/>
    </location>
</feature>
<feature type="mutagenesis site" description="Strongly reduced binding to the stem loop 4 of 7SK RNA." evidence="20">
    <original>R</original>
    <variation>A</variation>
    <location>
        <position position="496"/>
    </location>
</feature>
<feature type="sequence conflict" description="In Ref. 5; AAI07710." evidence="29" ref="5">
    <original>R</original>
    <variation>G</variation>
    <location>
        <position position="295"/>
    </location>
</feature>
<feature type="sequence conflict" description="In Ref. 2; AAF65503 and 6; CAB43230." evidence="29" ref="2 6">
    <original>K</original>
    <variation>R</variation>
    <location>
        <position position="516"/>
    </location>
</feature>
<feature type="sequence conflict" description="In Ref. 6; CAB43230." evidence="29" ref="6">
    <original>K</original>
    <variation>Q</variation>
    <location>
        <position position="560"/>
    </location>
</feature>
<feature type="helix" evidence="42">
    <location>
        <begin position="30"/>
        <end position="45"/>
    </location>
</feature>
<feature type="helix" evidence="42">
    <location>
        <begin position="48"/>
        <end position="53"/>
    </location>
</feature>
<feature type="helix" evidence="42">
    <location>
        <begin position="55"/>
        <end position="62"/>
    </location>
</feature>
<feature type="helix" evidence="42">
    <location>
        <begin position="71"/>
        <end position="75"/>
    </location>
</feature>
<feature type="helix" evidence="42">
    <location>
        <begin position="78"/>
        <end position="81"/>
    </location>
</feature>
<feature type="helix" evidence="42">
    <location>
        <begin position="87"/>
        <end position="93"/>
    </location>
</feature>
<feature type="strand" evidence="42">
    <location>
        <begin position="106"/>
        <end position="110"/>
    </location>
</feature>
<feature type="helix" evidence="42">
    <location>
        <begin position="122"/>
        <end position="125"/>
    </location>
</feature>
<feature type="strand" evidence="42">
    <location>
        <begin position="127"/>
        <end position="130"/>
    </location>
</feature>
<feature type="helix" evidence="42">
    <location>
        <begin position="137"/>
        <end position="146"/>
    </location>
</feature>
<feature type="strand" evidence="42">
    <location>
        <begin position="151"/>
        <end position="155"/>
    </location>
</feature>
<feature type="strand" evidence="42">
    <location>
        <begin position="160"/>
        <end position="162"/>
    </location>
</feature>
<feature type="strand" evidence="42">
    <location>
        <begin position="167"/>
        <end position="175"/>
    </location>
</feature>
<feature type="helix" evidence="42">
    <location>
        <begin position="176"/>
        <end position="183"/>
    </location>
</feature>
<feature type="turn" evidence="42">
    <location>
        <begin position="184"/>
        <end position="187"/>
    </location>
</feature>
<feature type="strand" evidence="44">
    <location>
        <begin position="456"/>
        <end position="463"/>
    </location>
</feature>
<feature type="helix" evidence="44">
    <location>
        <begin position="468"/>
        <end position="476"/>
    </location>
</feature>
<feature type="strand" evidence="44">
    <location>
        <begin position="481"/>
        <end position="485"/>
    </location>
</feature>
<feature type="strand" evidence="44">
    <location>
        <begin position="491"/>
        <end position="499"/>
    </location>
</feature>
<feature type="helix" evidence="44">
    <location>
        <begin position="500"/>
        <end position="508"/>
    </location>
</feature>
<feature type="helix" evidence="44">
    <location>
        <begin position="510"/>
        <end position="515"/>
    </location>
</feature>
<feature type="strand" evidence="44">
    <location>
        <begin position="519"/>
        <end position="523"/>
    </location>
</feature>
<feature type="helix" evidence="44">
    <location>
        <begin position="526"/>
        <end position="544"/>
    </location>
</feature>
<feature type="strand" evidence="43">
    <location>
        <begin position="551"/>
        <end position="555"/>
    </location>
</feature>
<gene>
    <name evidence="26 30" type="primary">LARP7</name>
    <name evidence="28" type="ORF">HDCMA18P</name>
</gene>
<protein>
    <recommendedName>
        <fullName evidence="26">La-related protein 7</fullName>
    </recommendedName>
    <alternativeName>
        <fullName evidence="26">La ribonucleoprotein domain family member 7</fullName>
        <shortName evidence="27">hLARP7</shortName>
    </alternativeName>
    <alternativeName>
        <fullName evidence="25">P-TEFb-interaction protein for 7SK stability</fullName>
        <shortName evidence="25">PIP7S</shortName>
    </alternativeName>
</protein>
<comment type="function">
    <text evidence="1 6 7 8 16 23">RNA-binding protein that specifically binds distinct small nuclear RNA (snRNAs) and regulates their processing and function (PubMed:18249148, PubMed:32017898). Specifically binds the 7SK snRNA (7SK RNA) and acts as a core component of the 7SK ribonucleoprotein (RNP) complex, thereby acting as a negative regulator of transcription elongation by RNA polymerase II (PubMed:18249148, PubMed:18483487). The 7SK RNP complex sequesters the positive transcription elongation factor b (P-TEFb) in a large inactive 7SK RNP complex preventing RNA polymerase II phosphorylation and subsequent transcriptional elongation (PubMed:18249148, PubMed:18483487). The 7SK RNP complex also promotes snRNA gene transcription by RNA polymerase II via interaction with the little elongation complex (LEC) (PubMed:28254838). LARP7 specifically binds to the highly conserved 3'-terminal U-rich stretch of 7SK RNA; on stimulation, remains associated with 7SK RNA, whereas P-TEFb is released from the complex (PubMed:18281698, PubMed:18483487). LARP7 also acts as a regulator of mRNA splicing fidelity by promoting U6 snRNA processing (PubMed:32017898). Specifically binds U6 snRNAs and associates with a subset of box C/D RNP complexes: promotes U6 snRNA 2'-O-methylation by facilitating U6 snRNA loading into box C/D RNP complexes (PubMed:32017898). U6 snRNA 2'-O-methylation is required for mRNA splicing fidelity (PubMed:32017898). Binds U6 snRNAs with a 5'-CAGGG-3' sequence motif (PubMed:32017898). U6 snRNA processing is required for spermatogenesis (By similarity).</text>
</comment>
<comment type="subunit">
    <text evidence="7 8 9 17 22 23">Core component of the 7SK RNP complex, at least composed of 7SK RNA, LARP7, MEPCE, HEXIM1 (or HEXIM2) and P-TEFb (composed of CDK9 and CCNT1/cyclin-T1) (PubMed:18281698, PubMed:18483487, PubMed:19906723). Interacts with METTL16 (PubMed:29051200). Interacts with RBM7; upon genotoxic stress this interaction is enhanced, triggering the release of inactive P-TEFb complex from the core, yielding to P-TEFb complex activation (PubMed:30824372). Associates with box C/D small nucleolar ribonucleoprotein (snoRNP) complexes (PubMed:32017898).</text>
</comment>
<comment type="interaction">
    <interactant intactId="EBI-2371923">
        <id>Q4G0J3</id>
    </interactant>
    <interactant intactId="EBI-1383449">
        <id>P50750</id>
        <label>CDK9</label>
    </interactant>
    <organismsDiffer>false</organismsDiffer>
    <experiments>18</experiments>
</comment>
<comment type="interaction">
    <interactant intactId="EBI-2371923">
        <id>Q4G0J3</id>
    </interactant>
    <interactant intactId="EBI-357942">
        <id>Q9NR30</id>
        <label>DDX21</label>
    </interactant>
    <organismsDiffer>false</organismsDiffer>
    <experiments>4</experiments>
</comment>
<comment type="interaction">
    <interactant intactId="EBI-2371923">
        <id>Q4G0J3</id>
    </interactant>
    <interactant intactId="EBI-2832510">
        <id>O94992</id>
        <label>HEXIM1</label>
    </interactant>
    <organismsDiffer>false</organismsDiffer>
    <experiments>16</experiments>
</comment>
<comment type="interaction">
    <interactant intactId="EBI-2371923">
        <id>Q4G0J3</id>
    </interactant>
    <interactant intactId="EBI-5323863">
        <id>Q5S007</id>
        <label>LRRK2</label>
    </interactant>
    <organismsDiffer>false</organismsDiffer>
    <experiments>3</experiments>
</comment>
<comment type="interaction">
    <interactant intactId="EBI-2371923">
        <id>Q4G0J3</id>
    </interactant>
    <interactant intactId="EBI-3918068">
        <id>Q15646</id>
        <label>OASL</label>
    </interactant>
    <organismsDiffer>false</organismsDiffer>
    <experiments>3</experiments>
</comment>
<comment type="interaction">
    <interactant intactId="EBI-2371923">
        <id>Q4G0J3</id>
    </interactant>
    <interactant intactId="EBI-20625235">
        <id>A0A142I5B9</id>
    </interactant>
    <organismsDiffer>true</organismsDiffer>
    <experiments>2</experiments>
</comment>
<comment type="subcellular location">
    <subcellularLocation>
        <location evidence="8">Nucleus</location>
        <location evidence="8">Nucleoplasm</location>
    </subcellularLocation>
</comment>
<comment type="alternative products">
    <event type="alternative splicing"/>
    <isoform>
        <id>Q4G0J3-1</id>
        <name>1</name>
        <sequence type="displayed"/>
    </isoform>
    <isoform>
        <id>Q4G0J3-2</id>
        <name>2</name>
        <sequence type="described" ref="VSP_024021"/>
    </isoform>
    <isoform>
        <id>Q4G0J3-3</id>
        <name>3</name>
        <sequence type="described" ref="VSP_047390"/>
    </isoform>
</comment>
<comment type="domain">
    <text evidence="14 20">The xRRM domain binds the 3' end of 7SK snRNA (7SK RNA) at the top of stem-loop 4.</text>
</comment>
<comment type="disease" evidence="10 11 13 15 18 19 21 23">
    <disease id="DI-03653">
        <name>Alazami syndrome</name>
        <acronym>ALAZS</acronym>
        <description>A syndromic form of primordial dwarfism, a condition characterized by severe growth restriction that has its onset in utero, and results in short stature and undersize. ALAZS patients manifest severe intellectual disability and distinct facial features including malar hypoplasia, deep-set eyes, broad nose, short philtrum, and macrostomia. Some patients have non-specific and inconsistent skeletal findings, for example, scoliosis and mild epiphyseal changes in the proximal phalanges, but no frank dysplasia.</description>
        <dbReference type="MIM" id="615071"/>
    </disease>
    <text>The disease is caused by variants affecting the gene represented in this entry.</text>
</comment>
<comment type="similarity">
    <text evidence="29">Belongs to the LARP7 family.</text>
</comment>
<comment type="sequence caution" evidence="29">
    <conflict type="erroneous initiation">
        <sequence resource="EMBL-CDS" id="AAH66945"/>
    </conflict>
    <text>Truncated N-terminus.</text>
</comment>
<proteinExistence type="evidence at protein level"/>
<reference key="1">
    <citation type="journal article" date="2008" name="EMBO Rep.">
        <title>The La-related protein LARP7 is a component of the 7SK ribonucleoprotein and affects transcription of cellular and viral polymerase II genes.</title>
        <authorList>
            <person name="Markert A."/>
            <person name="Grimm M."/>
            <person name="Martinez J."/>
            <person name="Wiesner J."/>
            <person name="Meyerhans A."/>
            <person name="Meyuhas O."/>
            <person name="Sickmann A."/>
            <person name="Fischer U."/>
        </authorList>
    </citation>
    <scope>NUCLEOTIDE SEQUENCE [MRNA] (ISOFORM 3)</scope>
    <scope>FUNCTION</scope>
    <scope>SUBCELLULAR LOCATION</scope>
    <scope>IDENTIFICATION IN THE 7SK RNP COMPLEX</scope>
</reference>
<reference key="2">
    <citation type="submission" date="1998-05" db="EMBL/GenBank/DDBJ databases">
        <title>A novel gene from human dendritic cell.</title>
        <authorList>
            <person name="Zhao Z."/>
            <person name="Huang X."/>
            <person name="Li N."/>
            <person name="Zhu X."/>
            <person name="Cao X."/>
        </authorList>
    </citation>
    <scope>NUCLEOTIDE SEQUENCE [LARGE SCALE MRNA] (ISOFORM 2)</scope>
    <source>
        <tissue>Dendritic cell</tissue>
    </source>
</reference>
<reference key="3">
    <citation type="journal article" date="2005" name="Nature">
        <title>Generation and annotation of the DNA sequences of human chromosomes 2 and 4.</title>
        <authorList>
            <person name="Hillier L.W."/>
            <person name="Graves T.A."/>
            <person name="Fulton R.S."/>
            <person name="Fulton L.A."/>
            <person name="Pepin K.H."/>
            <person name="Minx P."/>
            <person name="Wagner-McPherson C."/>
            <person name="Layman D."/>
            <person name="Wylie K."/>
            <person name="Sekhon M."/>
            <person name="Becker M.C."/>
            <person name="Fewell G.A."/>
            <person name="Delehaunty K.D."/>
            <person name="Miner T.L."/>
            <person name="Nash W.E."/>
            <person name="Kremitzki C."/>
            <person name="Oddy L."/>
            <person name="Du H."/>
            <person name="Sun H."/>
            <person name="Bradshaw-Cordum H."/>
            <person name="Ali J."/>
            <person name="Carter J."/>
            <person name="Cordes M."/>
            <person name="Harris A."/>
            <person name="Isak A."/>
            <person name="van Brunt A."/>
            <person name="Nguyen C."/>
            <person name="Du F."/>
            <person name="Courtney L."/>
            <person name="Kalicki J."/>
            <person name="Ozersky P."/>
            <person name="Abbott S."/>
            <person name="Armstrong J."/>
            <person name="Belter E.A."/>
            <person name="Caruso L."/>
            <person name="Cedroni M."/>
            <person name="Cotton M."/>
            <person name="Davidson T."/>
            <person name="Desai A."/>
            <person name="Elliott G."/>
            <person name="Erb T."/>
            <person name="Fronick C."/>
            <person name="Gaige T."/>
            <person name="Haakenson W."/>
            <person name="Haglund K."/>
            <person name="Holmes A."/>
            <person name="Harkins R."/>
            <person name="Kim K."/>
            <person name="Kruchowski S.S."/>
            <person name="Strong C.M."/>
            <person name="Grewal N."/>
            <person name="Goyea E."/>
            <person name="Hou S."/>
            <person name="Levy A."/>
            <person name="Martinka S."/>
            <person name="Mead K."/>
            <person name="McLellan M.D."/>
            <person name="Meyer R."/>
            <person name="Randall-Maher J."/>
            <person name="Tomlinson C."/>
            <person name="Dauphin-Kohlberg S."/>
            <person name="Kozlowicz-Reilly A."/>
            <person name="Shah N."/>
            <person name="Swearengen-Shahid S."/>
            <person name="Snider J."/>
            <person name="Strong J.T."/>
            <person name="Thompson J."/>
            <person name="Yoakum M."/>
            <person name="Leonard S."/>
            <person name="Pearman C."/>
            <person name="Trani L."/>
            <person name="Radionenko M."/>
            <person name="Waligorski J.E."/>
            <person name="Wang C."/>
            <person name="Rock S.M."/>
            <person name="Tin-Wollam A.-M."/>
            <person name="Maupin R."/>
            <person name="Latreille P."/>
            <person name="Wendl M.C."/>
            <person name="Yang S.-P."/>
            <person name="Pohl C."/>
            <person name="Wallis J.W."/>
            <person name="Spieth J."/>
            <person name="Bieri T.A."/>
            <person name="Berkowicz N."/>
            <person name="Nelson J.O."/>
            <person name="Osborne J."/>
            <person name="Ding L."/>
            <person name="Meyer R."/>
            <person name="Sabo A."/>
            <person name="Shotland Y."/>
            <person name="Sinha P."/>
            <person name="Wohldmann P.E."/>
            <person name="Cook L.L."/>
            <person name="Hickenbotham M.T."/>
            <person name="Eldred J."/>
            <person name="Williams D."/>
            <person name="Jones T.A."/>
            <person name="She X."/>
            <person name="Ciccarelli F.D."/>
            <person name="Izaurralde E."/>
            <person name="Taylor J."/>
            <person name="Schmutz J."/>
            <person name="Myers R.M."/>
            <person name="Cox D.R."/>
            <person name="Huang X."/>
            <person name="McPherson J.D."/>
            <person name="Mardis E.R."/>
            <person name="Clifton S.W."/>
            <person name="Warren W.C."/>
            <person name="Chinwalla A.T."/>
            <person name="Eddy S.R."/>
            <person name="Marra M.A."/>
            <person name="Ovcharenko I."/>
            <person name="Furey T.S."/>
            <person name="Miller W."/>
            <person name="Eichler E.E."/>
            <person name="Bork P."/>
            <person name="Suyama M."/>
            <person name="Torrents D."/>
            <person name="Waterston R.H."/>
            <person name="Wilson R.K."/>
        </authorList>
    </citation>
    <scope>NUCLEOTIDE SEQUENCE [LARGE SCALE GENOMIC DNA]</scope>
</reference>
<reference key="4">
    <citation type="submission" date="2005-07" db="EMBL/GenBank/DDBJ databases">
        <authorList>
            <person name="Mural R.J."/>
            <person name="Istrail S."/>
            <person name="Sutton G.G."/>
            <person name="Florea L."/>
            <person name="Halpern A.L."/>
            <person name="Mobarry C.M."/>
            <person name="Lippert R."/>
            <person name="Walenz B."/>
            <person name="Shatkay H."/>
            <person name="Dew I."/>
            <person name="Miller J.R."/>
            <person name="Flanigan M.J."/>
            <person name="Edwards N.J."/>
            <person name="Bolanos R."/>
            <person name="Fasulo D."/>
            <person name="Halldorsson B.V."/>
            <person name="Hannenhalli S."/>
            <person name="Turner R."/>
            <person name="Yooseph S."/>
            <person name="Lu F."/>
            <person name="Nusskern D.R."/>
            <person name="Shue B.C."/>
            <person name="Zheng X.H."/>
            <person name="Zhong F."/>
            <person name="Delcher A.L."/>
            <person name="Huson D.H."/>
            <person name="Kravitz S.A."/>
            <person name="Mouchard L."/>
            <person name="Reinert K."/>
            <person name="Remington K.A."/>
            <person name="Clark A.G."/>
            <person name="Waterman M.S."/>
            <person name="Eichler E.E."/>
            <person name="Adams M.D."/>
            <person name="Hunkapiller M.W."/>
            <person name="Myers E.W."/>
            <person name="Venter J.C."/>
        </authorList>
    </citation>
    <scope>NUCLEOTIDE SEQUENCE [LARGE SCALE GENOMIC DNA]</scope>
</reference>
<reference key="5">
    <citation type="journal article" date="2004" name="Genome Res.">
        <title>The status, quality, and expansion of the NIH full-length cDNA project: the Mammalian Gene Collection (MGC).</title>
        <authorList>
            <consortium name="The MGC Project Team"/>
        </authorList>
    </citation>
    <scope>NUCLEOTIDE SEQUENCE [LARGE SCALE MRNA] (ISOFORM 3)</scope>
    <source>
        <tissue>Testis</tissue>
    </source>
</reference>
<reference key="6">
    <citation type="journal article" date="2007" name="BMC Genomics">
        <title>The full-ORF clone resource of the German cDNA consortium.</title>
        <authorList>
            <person name="Bechtel S."/>
            <person name="Rosenfelder H."/>
            <person name="Duda A."/>
            <person name="Schmidt C.P."/>
            <person name="Ernst U."/>
            <person name="Wellenreuther R."/>
            <person name="Mehrle A."/>
            <person name="Schuster C."/>
            <person name="Bahr A."/>
            <person name="Bloecker H."/>
            <person name="Heubner D."/>
            <person name="Hoerlein A."/>
            <person name="Michel G."/>
            <person name="Wedler H."/>
            <person name="Koehrer K."/>
            <person name="Ottenwaelder B."/>
            <person name="Poustka A."/>
            <person name="Wiemann S."/>
            <person name="Schupp I."/>
        </authorList>
    </citation>
    <scope>NUCLEOTIDE SEQUENCE [LARGE SCALE MRNA] OF 293-582 (ISOFORM 1)</scope>
    <source>
        <tissue>Fetal brain</tissue>
    </source>
</reference>
<reference key="7">
    <citation type="journal article" date="2006" name="Cell">
        <title>Global, in vivo, and site-specific phosphorylation dynamics in signaling networks.</title>
        <authorList>
            <person name="Olsen J.V."/>
            <person name="Blagoev B."/>
            <person name="Gnad F."/>
            <person name="Macek B."/>
            <person name="Kumar C."/>
            <person name="Mortensen P."/>
            <person name="Mann M."/>
        </authorList>
    </citation>
    <scope>IDENTIFICATION BY MASS SPECTROMETRY [LARGE SCALE ANALYSIS]</scope>
    <source>
        <tissue>Cervix carcinoma</tissue>
    </source>
</reference>
<reference key="8">
    <citation type="journal article" date="2008" name="Mol. Cell">
        <title>A La-related protein modulates 7SK snRNP integrity to suppress P-TEFb-dependent transcriptional elongation and tumorigenesis.</title>
        <authorList>
            <person name="He N."/>
            <person name="Jahchan N.S."/>
            <person name="Hong E."/>
            <person name="Li Q."/>
            <person name="Bayfield M.A."/>
            <person name="Maraia R.J."/>
            <person name="Luo K."/>
            <person name="Zhou Q."/>
        </authorList>
    </citation>
    <scope>FUNCTION</scope>
    <scope>MUTAGENESIS OF TYR-128</scope>
</reference>
<reference key="9">
    <citation type="journal article" date="2008" name="Nucleic Acids Res.">
        <title>LARP7 is a stable component of the 7SK snRNP while P-TEFb, HEXIM1 and hnRNP A1 are reversibly associated.</title>
        <authorList>
            <person name="Krueger B.J."/>
            <person name="Jeronimo C."/>
            <person name="Roy B.B."/>
            <person name="Bouchard A."/>
            <person name="Barrandon C."/>
            <person name="Byers S.A."/>
            <person name="Searcey C.E."/>
            <person name="Cooper J.J."/>
            <person name="Bensaude O."/>
            <person name="Cohen E.A."/>
            <person name="Coulombe B."/>
            <person name="Price D.H."/>
        </authorList>
    </citation>
    <scope>FUNCTION</scope>
    <scope>IDENTIFICATION IN THE 7SK RNP COMPLEX</scope>
</reference>
<reference key="10">
    <citation type="journal article" date="2008" name="Proc. Natl. Acad. Sci. U.S.A.">
        <title>A quantitative atlas of mitotic phosphorylation.</title>
        <authorList>
            <person name="Dephoure N."/>
            <person name="Zhou C."/>
            <person name="Villen J."/>
            <person name="Beausoleil S.A."/>
            <person name="Bakalarski C.E."/>
            <person name="Elledge S.J."/>
            <person name="Gygi S.P."/>
        </authorList>
    </citation>
    <scope>PHOSPHORYLATION [LARGE SCALE ANALYSIS] AT THR-257; SER-258; SER-261; SER-273; SER-337 AND THR-338</scope>
    <scope>IDENTIFICATION BY MASS SPECTROMETRY [LARGE SCALE ANALYSIS]</scope>
    <source>
        <tissue>Cervix carcinoma</tissue>
    </source>
</reference>
<reference key="11">
    <citation type="journal article" date="2008" name="Proteomics">
        <title>Large-scale phosphoproteome analysis of human liver tissue by enrichment and fractionation of phosphopeptides with strong anion exchange chromatography.</title>
        <authorList>
            <person name="Han G."/>
            <person name="Ye M."/>
            <person name="Zhou H."/>
            <person name="Jiang X."/>
            <person name="Feng S."/>
            <person name="Jiang X."/>
            <person name="Tian R."/>
            <person name="Wan D."/>
            <person name="Zou H."/>
            <person name="Gu J."/>
        </authorList>
    </citation>
    <scope>IDENTIFICATION BY MASS SPECTROMETRY [LARGE SCALE ANALYSIS]</scope>
    <source>
        <tissue>Liver</tissue>
    </source>
</reference>
<reference key="12">
    <citation type="journal article" date="2009" name="Anal. Chem.">
        <title>Lys-N and trypsin cover complementary parts of the phosphoproteome in a refined SCX-based approach.</title>
        <authorList>
            <person name="Gauci S."/>
            <person name="Helbig A.O."/>
            <person name="Slijper M."/>
            <person name="Krijgsveld J."/>
            <person name="Heck A.J."/>
            <person name="Mohammed S."/>
        </authorList>
    </citation>
    <scope>IDENTIFICATION BY MASS SPECTROMETRY [LARGE SCALE ANALYSIS]</scope>
</reference>
<reference key="13">
    <citation type="journal article" date="2009" name="Mol. Cell. Proteomics">
        <title>Large-scale proteomics analysis of the human kinome.</title>
        <authorList>
            <person name="Oppermann F.S."/>
            <person name="Gnad F."/>
            <person name="Olsen J.V."/>
            <person name="Hornberger R."/>
            <person name="Greff Z."/>
            <person name="Keri G."/>
            <person name="Mann M."/>
            <person name="Daub H."/>
        </authorList>
    </citation>
    <scope>IDENTIFICATION BY MASS SPECTROMETRY [LARGE SCALE ANALYSIS]</scope>
</reference>
<reference key="14">
    <citation type="journal article" date="2009" name="Sci. Signal.">
        <title>Quantitative phosphoproteomic analysis of T cell receptor signaling reveals system-wide modulation of protein-protein interactions.</title>
        <authorList>
            <person name="Mayya V."/>
            <person name="Lundgren D.H."/>
            <person name="Hwang S.-I."/>
            <person name="Rezaul K."/>
            <person name="Wu L."/>
            <person name="Eng J.K."/>
            <person name="Rodionov V."/>
            <person name="Han D.K."/>
        </authorList>
    </citation>
    <scope>PHOSPHORYLATION [LARGE SCALE ANALYSIS] AT SER-337 AND THR-338</scope>
    <scope>IDENTIFICATION BY MASS SPECTROMETRY [LARGE SCALE ANALYSIS]</scope>
    <source>
        <tissue>Leukemic T-cell</tissue>
    </source>
</reference>
<reference key="15">
    <citation type="journal article" date="2010" name="Nucleic Acids Res.">
        <title>A capping-independent function of MePCE in stabilizing 7SK snRNA and facilitating the assembly of 7SK snRNP.</title>
        <authorList>
            <person name="Xue Y."/>
            <person name="Yang Z."/>
            <person name="Chen R."/>
            <person name="Zhou Q."/>
        </authorList>
    </citation>
    <scope>IDENTIFICATION IN THE 7SK RNP COMPLEX</scope>
</reference>
<reference key="16">
    <citation type="journal article" date="2010" name="Sci. Signal.">
        <title>Quantitative phosphoproteomics reveals widespread full phosphorylation site occupancy during mitosis.</title>
        <authorList>
            <person name="Olsen J.V."/>
            <person name="Vermeulen M."/>
            <person name="Santamaria A."/>
            <person name="Kumar C."/>
            <person name="Miller M.L."/>
            <person name="Jensen L.J."/>
            <person name="Gnad F."/>
            <person name="Cox J."/>
            <person name="Jensen T.S."/>
            <person name="Nigg E.A."/>
            <person name="Brunak S."/>
            <person name="Mann M."/>
        </authorList>
    </citation>
    <scope>PHOSPHORYLATION [LARGE SCALE ANALYSIS] AT SER-258; SER-261; SER-337 AND THR-338</scope>
    <scope>IDENTIFICATION BY MASS SPECTROMETRY [LARGE SCALE ANALYSIS]</scope>
    <source>
        <tissue>Cervix carcinoma</tissue>
    </source>
</reference>
<reference key="17">
    <citation type="journal article" date="2011" name="BMC Syst. Biol.">
        <title>Initial characterization of the human central proteome.</title>
        <authorList>
            <person name="Burkard T.R."/>
            <person name="Planyavsky M."/>
            <person name="Kaupe I."/>
            <person name="Breitwieser F.P."/>
            <person name="Buerckstuemmer T."/>
            <person name="Bennett K.L."/>
            <person name="Superti-Furga G."/>
            <person name="Colinge J."/>
        </authorList>
    </citation>
    <scope>IDENTIFICATION BY MASS SPECTROMETRY [LARGE SCALE ANALYSIS]</scope>
</reference>
<reference key="18">
    <citation type="journal article" date="2011" name="Nature">
        <title>Deep sequencing reveals 50 novel genes for recessive cognitive disorders.</title>
        <authorList>
            <person name="Najmabadi H."/>
            <person name="Hu H."/>
            <person name="Garshasbi M."/>
            <person name="Zemojtel T."/>
            <person name="Abedini S.S."/>
            <person name="Chen W."/>
            <person name="Hosseini M."/>
            <person name="Behjati F."/>
            <person name="Haas S."/>
            <person name="Jamali P."/>
            <person name="Zecha A."/>
            <person name="Mohseni M."/>
            <person name="Puettmann L."/>
            <person name="Vahid L.N."/>
            <person name="Jensen C."/>
            <person name="Moheb L.A."/>
            <person name="Bienek M."/>
            <person name="Larti F."/>
            <person name="Mueller I."/>
            <person name="Weissmann R."/>
            <person name="Darvish H."/>
            <person name="Wrogemann K."/>
            <person name="Hadavi V."/>
            <person name="Lipkowitz B."/>
            <person name="Esmaeeli-Nieh S."/>
            <person name="Wieczorek D."/>
            <person name="Kariminejad R."/>
            <person name="Firouzabadi S.G."/>
            <person name="Cohen M."/>
            <person name="Fattahi Z."/>
            <person name="Rost I."/>
            <person name="Mojahedi F."/>
            <person name="Hertzberg C."/>
            <person name="Dehghan A."/>
            <person name="Rajab A."/>
            <person name="Banavandi M.J."/>
            <person name="Hoffer J."/>
            <person name="Falah M."/>
            <person name="Musante L."/>
            <person name="Kalscheuer V."/>
            <person name="Ullmann R."/>
            <person name="Kuss A.W."/>
            <person name="Tzschach A."/>
            <person name="Kahrizi K."/>
            <person name="Ropers H.H."/>
        </authorList>
    </citation>
    <scope>INVOLVEMENT IN ALAZS</scope>
</reference>
<reference key="19">
    <citation type="journal article" date="2011" name="Sci. Signal.">
        <title>System-wide temporal characterization of the proteome and phosphoproteome of human embryonic stem cell differentiation.</title>
        <authorList>
            <person name="Rigbolt K.T."/>
            <person name="Prokhorova T.A."/>
            <person name="Akimov V."/>
            <person name="Henningsen J."/>
            <person name="Johansen P.T."/>
            <person name="Kratchmarova I."/>
            <person name="Kassem M."/>
            <person name="Mann M."/>
            <person name="Olsen J.V."/>
            <person name="Blagoev B."/>
        </authorList>
    </citation>
    <scope>PHOSPHORYLATION [LARGE SCALE ANALYSIS] AT SER-258; SER-261; SER-337 AND THR-338</scope>
    <scope>IDENTIFICATION BY MASS SPECTROMETRY [LARGE SCALE ANALYSIS]</scope>
</reference>
<reference key="20">
    <citation type="journal article" date="2012" name="Hum. Mutat.">
        <title>Loss of function mutation in LARP7, chaperone of 7SK ncRNA, causes a syndrome of facial dysmorphism, intellectual disability, and primordial dwarfism.</title>
        <authorList>
            <person name="Alazami A.M."/>
            <person name="Al-Owain M."/>
            <person name="Alzahrani F."/>
            <person name="Shuaib T."/>
            <person name="Al-Shamrani H."/>
            <person name="Al-Falki Y.H."/>
            <person name="Al-Qahtani S.M."/>
            <person name="Alsheddi T."/>
            <person name="Colak D."/>
            <person name="Alkuraya F.S."/>
        </authorList>
    </citation>
    <scope>INVOLVEMENT IN ALAZS</scope>
</reference>
<reference key="21">
    <citation type="journal article" date="2012" name="Proc. Natl. Acad. Sci. U.S.A.">
        <title>N-terminal acetylome analyses and functional insights of the N-terminal acetyltransferase NatB.</title>
        <authorList>
            <person name="Van Damme P."/>
            <person name="Lasa M."/>
            <person name="Polevoda B."/>
            <person name="Gazquez C."/>
            <person name="Elosegui-Artola A."/>
            <person name="Kim D.S."/>
            <person name="De Juan-Pardo E."/>
            <person name="Demeyer K."/>
            <person name="Hole K."/>
            <person name="Larrea E."/>
            <person name="Timmerman E."/>
            <person name="Prieto J."/>
            <person name="Arnesen T."/>
            <person name="Sherman F."/>
            <person name="Gevaert K."/>
            <person name="Aldabe R."/>
        </authorList>
    </citation>
    <scope>ACETYLATION [LARGE SCALE ANALYSIS] AT MET-1</scope>
    <scope>IDENTIFICATION BY MASS SPECTROMETRY [LARGE SCALE ANALYSIS]</scope>
</reference>
<reference key="22">
    <citation type="journal article" date="2013" name="J. Proteome Res.">
        <title>Toward a comprehensive characterization of a human cancer cell phosphoproteome.</title>
        <authorList>
            <person name="Zhou H."/>
            <person name="Di Palma S."/>
            <person name="Preisinger C."/>
            <person name="Peng M."/>
            <person name="Polat A.N."/>
            <person name="Heck A.J."/>
            <person name="Mohammed S."/>
        </authorList>
    </citation>
    <scope>PHOSPHORYLATION [LARGE SCALE ANALYSIS] AT SER-258; SER-261; SER-298; SER-299; SER-300; SER-337; THR-338 AND SER-351</scope>
    <scope>IDENTIFICATION BY MASS SPECTROMETRY [LARGE SCALE ANALYSIS]</scope>
    <source>
        <tissue>Cervix carcinoma</tissue>
        <tissue>Erythroleukemia</tissue>
    </source>
</reference>
<reference key="23">
    <citation type="journal article" date="2014" name="J. Proteomics">
        <title>An enzyme assisted RP-RPLC approach for in-depth analysis of human liver phosphoproteome.</title>
        <authorList>
            <person name="Bian Y."/>
            <person name="Song C."/>
            <person name="Cheng K."/>
            <person name="Dong M."/>
            <person name="Wang F."/>
            <person name="Huang J."/>
            <person name="Sun D."/>
            <person name="Wang L."/>
            <person name="Ye M."/>
            <person name="Zou H."/>
        </authorList>
    </citation>
    <scope>PHOSPHORYLATION [LARGE SCALE ANALYSIS] AT SER-261; SER-337 AND THR-338</scope>
    <scope>IDENTIFICATION BY MASS SPECTROMETRY [LARGE SCALE ANALYSIS]</scope>
    <source>
        <tissue>Liver</tissue>
    </source>
</reference>
<reference key="24">
    <citation type="journal article" date="2016" name="Am. J. Med. Genet. A">
        <title>Compound heterozygous variants in the LARP7 gene as a cause of Alazami syndrome in a Caucasian female with significant failure to thrive, short stature, and developmental disability.</title>
        <authorList>
            <person name="Ling T.T."/>
            <person name="Sorrentino S."/>
        </authorList>
    </citation>
    <scope>INVOLVEMENT IN ALAZS</scope>
</reference>
<reference key="25">
    <citation type="journal article" date="2016" name="BMC Genomics">
        <title>Impaired telomere maintenance in Alazami syndrome patients with LARP7 deficiency.</title>
        <authorList>
            <person name="Holohan B."/>
            <person name="Kim W."/>
            <person name="Lai T.P."/>
            <person name="Hoshiyama H."/>
            <person name="Zhang N."/>
            <person name="Alazami A.M."/>
            <person name="Wright W.E."/>
            <person name="Meyn M.S."/>
            <person name="Alkuraya F.S."/>
            <person name="Shay J.W."/>
        </authorList>
    </citation>
    <scope>INVOLVEMENT IN ALAZS</scope>
</reference>
<reference key="26">
    <citation type="journal article" date="2017" name="EMBO J.">
        <title>The 7SK snRNP associates with the little elongation complex to promote snRNA gene expression.</title>
        <authorList>
            <person name="Egloff S."/>
            <person name="Vitali P."/>
            <person name="Tellier M."/>
            <person name="Raffel R."/>
            <person name="Murphy S."/>
            <person name="Kiss T."/>
        </authorList>
    </citation>
    <scope>FUNCTION</scope>
</reference>
<reference key="27">
    <citation type="journal article" date="2017" name="EMBO Rep.">
        <title>Human METTL16 is a N6-methyladenosine (m6A) methyltransferase that targets pre-mRNAs and various non-coding RNAs.</title>
        <authorList>
            <person name="Warda A.S."/>
            <person name="Kretschmer J."/>
            <person name="Hackert P."/>
            <person name="Lenz C."/>
            <person name="Urlaub H."/>
            <person name="Hoebartner C."/>
            <person name="Sloan K.E."/>
            <person name="Bohnsack M.T."/>
        </authorList>
    </citation>
    <scope>INTERACTION WITH METTL16</scope>
</reference>
<reference key="28">
    <citation type="journal article" date="2017" name="Nat. Struct. Mol. Biol.">
        <title>Site-specific mapping of the human SUMO proteome reveals co-modification with phosphorylation.</title>
        <authorList>
            <person name="Hendriks I.A."/>
            <person name="Lyon D."/>
            <person name="Young C."/>
            <person name="Jensen L.J."/>
            <person name="Vertegaal A.C."/>
            <person name="Nielsen M.L."/>
        </authorList>
    </citation>
    <scope>SUMOYLATION [LARGE SCALE ANALYSIS] AT LYS-237 AND LYS-410</scope>
    <scope>IDENTIFICATION BY MASS SPECTROMETRY [LARGE SCALE ANALYSIS]</scope>
</reference>
<reference key="29">
    <citation type="journal article" date="2018" name="Hum. Genome Var.">
        <title>Novel compound heterozygous variants in the LARP7 gene in a patient with Alazami syndrome.</title>
        <authorList>
            <person name="Dateki S."/>
            <person name="Kitajima T."/>
            <person name="Kihara T."/>
            <person name="Watanabe S."/>
            <person name="Yoshiura K.I."/>
            <person name="Moriuchi H."/>
        </authorList>
    </citation>
    <scope>INVOLVEMENT IN ALAZS</scope>
</reference>
<reference key="30">
    <citation type="journal article" date="2018" name="J. Hum. Genet.">
        <title>Correction: Broadening the phenotypic spectrum of pathogenic LARP7 variants: two cases with intellectual disability, variable growth retardation and distinct facial features.</title>
        <authorList>
            <person name="Hollink I.H.I.M."/>
            <person name="Alfadhel M."/>
            <person name="Al-Wakeel A.S."/>
            <person name="Ababneh F."/>
            <person name="Pfundt R."/>
            <person name="de Man S.A."/>
            <person name="Abou Jamra R."/>
            <person name="Rolfs A."/>
            <person name="Bertoli-Avella A.M."/>
            <person name="van de Laar I.M.B.H."/>
        </authorList>
    </citation>
    <scope>INVOLVEMENT IN ALAZS</scope>
</reference>
<reference key="31">
    <citation type="journal article" date="2019" name="Eur. J. Med. Genet.">
        <title>LARP7 variants and further delineation of the Alazami syndrome phenotypic spectrum among primordial dwarfisms: 2 sisters.</title>
        <authorList>
            <person name="Imbert-Bouteille M."/>
            <person name="Mau Them F.T."/>
            <person name="Thevenon J."/>
            <person name="Guignard T."/>
            <person name="Gatinois V."/>
            <person name="Riviere J.B."/>
            <person name="Boland A."/>
            <person name="Meyer V."/>
            <person name="Deleuze J.F."/>
            <person name="Sanchez E."/>
            <person name="Apparailly F."/>
            <person name="Genevieve D."/>
            <person name="Willems M."/>
        </authorList>
    </citation>
    <scope>INVOLVEMENT IN ALAZS</scope>
</reference>
<reference key="32">
    <citation type="journal article" date="2019" name="Mol. Cell">
        <title>P-TEFb Activation by RBM7 Shapes a Pro-survival Transcriptional Response to Genotoxic Stress.</title>
        <authorList>
            <person name="Bugai A."/>
            <person name="Quaresma A.J.C."/>
            <person name="Friedel C.C."/>
            <person name="Lenasi T."/>
            <person name="Duester R."/>
            <person name="Sibley C.R."/>
            <person name="Fujinaga K."/>
            <person name="Kukanja P."/>
            <person name="Hennig T."/>
            <person name="Blasius M."/>
            <person name="Geyer M."/>
            <person name="Ule J."/>
            <person name="Doelken L."/>
            <person name="Barboric M."/>
        </authorList>
    </citation>
    <scope>INTERACTION WITH RBM7</scope>
</reference>
<reference key="33">
    <citation type="journal article" date="2020" name="Mol. Cell">
        <title>The Alazami syndrome-associated protein LARP7 guides U6 small nuclear RNA modification and contributes to splicing robustness.</title>
        <authorList>
            <person name="Hasler D."/>
            <person name="Meduri R."/>
            <person name="Bak M."/>
            <person name="Lehmann G."/>
            <person name="Heizinger L."/>
            <person name="Wang X."/>
            <person name="Li Z.T."/>
            <person name="Sement F.M."/>
            <person name="Bruckmann A."/>
            <person name="Dock-Bregeon A.C."/>
            <person name="Merkl R."/>
            <person name="Kalb R."/>
            <person name="Grauer E."/>
            <person name="Kunstmann E."/>
            <person name="Zavolan M."/>
            <person name="Liu M.F."/>
            <person name="Fischer U."/>
            <person name="Meister G."/>
        </authorList>
    </citation>
    <scope>FUNCTION</scope>
    <scope>RNA-BINDING</scope>
    <scope>ASSOCIATION WITH THE BOX C/D RNP COMPLEX</scope>
    <scope>VARIANT ALAZS 558-ILE--ASP-582 DELINS LYS-ARG-LEU-ASP-TRP-GLN-ARG-LEU-ASN-LYS-ARG-VAL-ASN-ILE</scope>
    <scope>MUTAGENESIS OF PHE-44 AND TYR-483</scope>
    <scope>CHARACTERIZATION OF VARIANT ALAZS 558-ILE--ASP-582 DELINS LYS-ARG-LEU-ASP-TRP-GLN-ARG-LEU-ASN-LYS-ARG-VAL-ASN-ILE</scope>
</reference>
<reference evidence="31" key="34">
    <citation type="journal article" date="2015" name="Nucleic Acids Res.">
        <title>Structural insight into the mechanism of stabilization of the 7SK small nuclear RNA by LARP7.</title>
        <authorList>
            <person name="Uchikawa E."/>
            <person name="Natchiar K.S."/>
            <person name="Han X."/>
            <person name="Proux F."/>
            <person name="Roblin P."/>
            <person name="Zhang E."/>
            <person name="Durand A."/>
            <person name="Klaholz B.P."/>
            <person name="Dock-Bregeon A.C."/>
        </authorList>
    </citation>
    <scope>X-RAY CRYSTALLOGRAPHY (3.20 ANGSTROMS) OF 1-208</scope>
    <scope>RNA-BINDING</scope>
    <scope>MUTAGENESIS OF GLU-130 AND PHE-168</scope>
</reference>
<reference evidence="32" key="35">
    <citation type="journal article" date="2016" name="Nucleic Acids Res.">
        <title>hLARP7 C-terminal domain contains an xRRM that binds the 3' hairpin of 7SK RNA.</title>
        <authorList>
            <person name="Eichhorn C.D."/>
            <person name="Chug R."/>
            <person name="Feigon J."/>
        </authorList>
    </citation>
    <scope>STRUCTURE BY NMR OF 445-561</scope>
    <scope>RNA-BINDING</scope>
    <scope>DOMAIN</scope>
</reference>
<reference evidence="33" key="36">
    <citation type="journal article" date="2018" name="Proc. Natl. Acad. Sci. U.S.A.">
        <title>Structural basis for recognition of human 7SK long noncoding RNA by the La-related protein Larp7.</title>
        <authorList>
            <person name="Eichhorn C.D."/>
            <person name="Yang Y."/>
            <person name="Repeta L."/>
            <person name="Feigon J."/>
        </authorList>
    </citation>
    <scope>X-RAY CRYSTALLOGRAPHY (2.21 ANGSTROMS) OF 445-556</scope>
    <scope>RNA-BINDING</scope>
    <scope>DOMAIN</scope>
    <scope>MUTAGENESIS OF PHE-451; ARG-472; TYR-483 AND ARG-496</scope>
</reference>
<evidence type="ECO:0000250" key="1">
    <source>
        <dbReference type="UniProtKB" id="Q05CL8"/>
    </source>
</evidence>
<evidence type="ECO:0000255" key="2">
    <source>
        <dbReference type="PROSITE-ProRule" id="PRU00176"/>
    </source>
</evidence>
<evidence type="ECO:0000255" key="3">
    <source>
        <dbReference type="PROSITE-ProRule" id="PRU00332"/>
    </source>
</evidence>
<evidence type="ECO:0000255" key="4">
    <source>
        <dbReference type="PROSITE-ProRule" id="PRU01288"/>
    </source>
</evidence>
<evidence type="ECO:0000256" key="5">
    <source>
        <dbReference type="SAM" id="MobiDB-lite"/>
    </source>
</evidence>
<evidence type="ECO:0000269" key="6">
    <source>
    </source>
</evidence>
<evidence type="ECO:0000269" key="7">
    <source>
    </source>
</evidence>
<evidence type="ECO:0000269" key="8">
    <source>
    </source>
</evidence>
<evidence type="ECO:0000269" key="9">
    <source>
    </source>
</evidence>
<evidence type="ECO:0000269" key="10">
    <source>
    </source>
</evidence>
<evidence type="ECO:0000269" key="11">
    <source>
    </source>
</evidence>
<evidence type="ECO:0000269" key="12">
    <source>
    </source>
</evidence>
<evidence type="ECO:0000269" key="13">
    <source>
    </source>
</evidence>
<evidence type="ECO:0000269" key="14">
    <source>
    </source>
</evidence>
<evidence type="ECO:0000269" key="15">
    <source>
    </source>
</evidence>
<evidence type="ECO:0000269" key="16">
    <source>
    </source>
</evidence>
<evidence type="ECO:0000269" key="17">
    <source>
    </source>
</evidence>
<evidence type="ECO:0000269" key="18">
    <source>
    </source>
</evidence>
<evidence type="ECO:0000269" key="19">
    <source>
    </source>
</evidence>
<evidence type="ECO:0000269" key="20">
    <source>
    </source>
</evidence>
<evidence type="ECO:0000269" key="21">
    <source>
    </source>
</evidence>
<evidence type="ECO:0000269" key="22">
    <source>
    </source>
</evidence>
<evidence type="ECO:0000269" key="23">
    <source>
    </source>
</evidence>
<evidence type="ECO:0000303" key="24">
    <source>
    </source>
</evidence>
<evidence type="ECO:0000303" key="25">
    <source>
    </source>
</evidence>
<evidence type="ECO:0000303" key="26">
    <source>
    </source>
</evidence>
<evidence type="ECO:0000303" key="27">
    <source>
    </source>
</evidence>
<evidence type="ECO:0000303" key="28">
    <source ref="2"/>
</evidence>
<evidence type="ECO:0000305" key="29"/>
<evidence type="ECO:0000312" key="30">
    <source>
        <dbReference type="HGNC" id="HGNC:24912"/>
    </source>
</evidence>
<evidence type="ECO:0007744" key="31">
    <source>
        <dbReference type="PDB" id="4WKR"/>
    </source>
</evidence>
<evidence type="ECO:0007744" key="32">
    <source>
        <dbReference type="PDB" id="5KNW"/>
    </source>
</evidence>
<evidence type="ECO:0007744" key="33">
    <source>
        <dbReference type="PDB" id="6D12"/>
    </source>
</evidence>
<evidence type="ECO:0007744" key="34">
    <source>
    </source>
</evidence>
<evidence type="ECO:0007744" key="35">
    <source>
    </source>
</evidence>
<evidence type="ECO:0007744" key="36">
    <source>
    </source>
</evidence>
<evidence type="ECO:0007744" key="37">
    <source>
    </source>
</evidence>
<evidence type="ECO:0007744" key="38">
    <source>
    </source>
</evidence>
<evidence type="ECO:0007744" key="39">
    <source>
    </source>
</evidence>
<evidence type="ECO:0007744" key="40">
    <source>
    </source>
</evidence>
<evidence type="ECO:0007744" key="41">
    <source>
    </source>
</evidence>
<evidence type="ECO:0007829" key="42">
    <source>
        <dbReference type="PDB" id="4WKR"/>
    </source>
</evidence>
<evidence type="ECO:0007829" key="43">
    <source>
        <dbReference type="PDB" id="5KNW"/>
    </source>
</evidence>
<evidence type="ECO:0007829" key="44">
    <source>
        <dbReference type="PDB" id="6D12"/>
    </source>
</evidence>
<organism>
    <name type="scientific">Homo sapiens</name>
    <name type="common">Human</name>
    <dbReference type="NCBI Taxonomy" id="9606"/>
    <lineage>
        <taxon>Eukaryota</taxon>
        <taxon>Metazoa</taxon>
        <taxon>Chordata</taxon>
        <taxon>Craniata</taxon>
        <taxon>Vertebrata</taxon>
        <taxon>Euteleostomi</taxon>
        <taxon>Mammalia</taxon>
        <taxon>Eutheria</taxon>
        <taxon>Euarchontoglires</taxon>
        <taxon>Primates</taxon>
        <taxon>Haplorrhini</taxon>
        <taxon>Catarrhini</taxon>
        <taxon>Hominidae</taxon>
        <taxon>Homo</taxon>
    </lineage>
</organism>
<sequence>METESGNQEKVMEEESTEKKKEVEKKKRSRVKQVLADIAKQVDFWFGDANLHKDRFLREQIEKSRDGYVDISLLVSFNKMKKLTTDGKLIARALRSSAVVELDLEGTRIRRKKPLGERPKDEDERTVYVELLPKNVNHSWIERVFGKCGNVVYISIPHYKSTGDPKGFAFVEFETKEQAAKAIEFLNNPPEEAPRKPGIFPKTVKNKPIPALRVVEEKKKKKKKKGRMKKEDNIQAKEENMDTSNTSISKMKRSRPTSEGSDIESTEPQKQCSKKKKKRDRVEASSLPEVRTGKRKRSSSEDAESLAPRSKVKKIIQKDIIKEASEASKENRDIEISTEEEKDTGDLKDSSLLKTKRKHKKKHKERHKMGEEVIPLRVLSKSEWMDLKKEYLALQKASMASLKKTISQIKSESEMETDSGVPQNTGMKNEKTANREECRTQEKVNATGPQFVSGVIVKIISTEPLPGRKQVRDTLAAISEVLYVDLLEGDTECHARFKTPEDAQAVINAYTEINKKHCWKLEILSGDHEQRYWQKILVDRQAKLNQPREKKRGTEKLITKAEKIRLAKTQQASKHIRFSEYD</sequence>
<keyword id="KW-0002">3D-structure</keyword>
<keyword id="KW-0007">Acetylation</keyword>
<keyword id="KW-0025">Alternative splicing</keyword>
<keyword id="KW-0221">Differentiation</keyword>
<keyword id="KW-0225">Disease variant</keyword>
<keyword id="KW-0242">Dwarfism</keyword>
<keyword id="KW-0991">Intellectual disability</keyword>
<keyword id="KW-1017">Isopeptide bond</keyword>
<keyword id="KW-0507">mRNA processing</keyword>
<keyword id="KW-0508">mRNA splicing</keyword>
<keyword id="KW-0539">Nucleus</keyword>
<keyword id="KW-0597">Phosphoprotein</keyword>
<keyword id="KW-1267">Proteomics identification</keyword>
<keyword id="KW-1185">Reference proteome</keyword>
<keyword id="KW-0694">RNA-binding</keyword>
<keyword id="KW-0744">Spermatogenesis</keyword>
<keyword id="KW-0804">Transcription</keyword>
<keyword id="KW-0805">Transcription regulation</keyword>
<keyword id="KW-0832">Ubl conjugation</keyword>
<accession>Q4G0J3</accession>
<accession>B2ZHN6</accession>
<accession>Q3B7A9</accession>
<accession>Q9P1S7</accession>
<accession>Q9Y3Z8</accession>
<name>LARP7_HUMAN</name>